<sequence>ARSDNFVRL</sequence>
<accession>B3A0K1</accession>
<organism>
    <name type="scientific">Pachyphasma brandbergense</name>
    <name type="common">Gladiator</name>
    <name type="synonym">Heel-walker</name>
    <dbReference type="NCBI Taxonomy" id="1041430"/>
    <lineage>
        <taxon>Eukaryota</taxon>
        <taxon>Metazoa</taxon>
        <taxon>Ecdysozoa</taxon>
        <taxon>Arthropoda</taxon>
        <taxon>Hexapoda</taxon>
        <taxon>Insecta</taxon>
        <taxon>Pterygota</taxon>
        <taxon>Neoptera</taxon>
        <taxon>Polyneoptera</taxon>
        <taxon>Mantophasmatodea</taxon>
        <taxon>Mantophasmatidae</taxon>
        <taxon>Pachyphasma</taxon>
    </lineage>
</organism>
<reference evidence="5" key="1">
    <citation type="journal article" date="2012" name="Syst. Biol.">
        <title>Peptidomics-based phylogeny and biogeography of Mantophasmatodea (Hexapoda).</title>
        <authorList>
            <person name="Predel R."/>
            <person name="Neupert S."/>
            <person name="Huetteroth W."/>
            <person name="Kahnt J."/>
            <person name="Waidelich D."/>
            <person name="Roth S."/>
        </authorList>
    </citation>
    <scope>PROTEIN SEQUENCE</scope>
    <scope>AMIDATION AT LEU-9</scope>
    <source>
        <tissue evidence="3">Thoracic perisympathetic organs</tissue>
    </source>
</reference>
<proteinExistence type="evidence at protein level"/>
<name>FAR7_PACBA</name>
<evidence type="ECO:0000250" key="1">
    <source>
        <dbReference type="UniProtKB" id="P34405"/>
    </source>
</evidence>
<evidence type="ECO:0000255" key="2"/>
<evidence type="ECO:0000269" key="3">
    <source>
    </source>
</evidence>
<evidence type="ECO:0000303" key="4">
    <source>
    </source>
</evidence>
<evidence type="ECO:0000305" key="5"/>
<evidence type="ECO:0000305" key="6">
    <source>
    </source>
</evidence>
<feature type="peptide" id="PRO_0000421526" description="Extended FMRFamide-7" evidence="3">
    <location>
        <begin position="1"/>
        <end position="9"/>
    </location>
</feature>
<feature type="modified residue" description="Leucine amide" evidence="3">
    <location>
        <position position="9"/>
    </location>
</feature>
<feature type="unsure residue" description="L or I" evidence="3">
    <location>
        <position position="9"/>
    </location>
</feature>
<dbReference type="GO" id="GO:0005576">
    <property type="term" value="C:extracellular region"/>
    <property type="evidence" value="ECO:0007669"/>
    <property type="project" value="UniProtKB-SubCell"/>
</dbReference>
<dbReference type="GO" id="GO:0007218">
    <property type="term" value="P:neuropeptide signaling pathway"/>
    <property type="evidence" value="ECO:0007669"/>
    <property type="project" value="UniProtKB-KW"/>
</dbReference>
<protein>
    <recommendedName>
        <fullName evidence="4">Extended FMRFamide-7</fullName>
        <shortName evidence="4">FMRFa-7</shortName>
    </recommendedName>
</protein>
<keyword id="KW-0027">Amidation</keyword>
<keyword id="KW-0903">Direct protein sequencing</keyword>
<keyword id="KW-0527">Neuropeptide</keyword>
<keyword id="KW-0964">Secreted</keyword>
<comment type="function">
    <text evidence="1">FMRFamides and FMRFamide-like peptides are neuropeptides.</text>
</comment>
<comment type="subcellular location">
    <subcellularLocation>
        <location evidence="6">Secreted</location>
    </subcellularLocation>
</comment>
<comment type="similarity">
    <text evidence="2">Belongs to the FARP (FMRF amide related peptide) family.</text>
</comment>